<organism>
    <name type="scientific">Methanocaldococcus jannaschii (strain ATCC 43067 / DSM 2661 / JAL-1 / JCM 10045 / NBRC 100440)</name>
    <name type="common">Methanococcus jannaschii</name>
    <dbReference type="NCBI Taxonomy" id="243232"/>
    <lineage>
        <taxon>Archaea</taxon>
        <taxon>Methanobacteriati</taxon>
        <taxon>Methanobacteriota</taxon>
        <taxon>Methanomada group</taxon>
        <taxon>Methanococci</taxon>
        <taxon>Methanococcales</taxon>
        <taxon>Methanocaldococcaceae</taxon>
        <taxon>Methanocaldococcus</taxon>
    </lineage>
</organism>
<feature type="chain" id="PRO_0000107031" description="Uncharacterized protein MJ0780">
    <location>
        <begin position="1"/>
        <end position="335"/>
    </location>
</feature>
<feature type="transmembrane region" description="Helical" evidence="1">
    <location>
        <begin position="104"/>
        <end position="124"/>
    </location>
</feature>
<feature type="transmembrane region" description="Helical" evidence="1">
    <location>
        <begin position="128"/>
        <end position="148"/>
    </location>
</feature>
<feature type="transmembrane region" description="Helical" evidence="1">
    <location>
        <begin position="280"/>
        <end position="300"/>
    </location>
</feature>
<feature type="transmembrane region" description="Helical" evidence="1">
    <location>
        <begin position="310"/>
        <end position="330"/>
    </location>
</feature>
<protein>
    <recommendedName>
        <fullName>Uncharacterized protein MJ0780</fullName>
    </recommendedName>
</protein>
<accession>Q58190</accession>
<comment type="subcellular location">
    <subcellularLocation>
        <location evidence="2">Cell membrane</location>
        <topology evidence="2">Multi-pass membrane protein</topology>
    </subcellularLocation>
</comment>
<gene>
    <name type="ordered locus">MJ0780</name>
</gene>
<dbReference type="EMBL" id="L77117">
    <property type="protein sequence ID" value="AAB98779.1"/>
    <property type="molecule type" value="Genomic_DNA"/>
</dbReference>
<dbReference type="PIR" id="D64397">
    <property type="entry name" value="D64397"/>
</dbReference>
<dbReference type="RefSeq" id="WP_010870285.1">
    <property type="nucleotide sequence ID" value="NC_000909.1"/>
</dbReference>
<dbReference type="SMR" id="Q58190"/>
<dbReference type="STRING" id="243232.MJ_0780"/>
<dbReference type="PaxDb" id="243232-MJ_0780"/>
<dbReference type="EnsemblBacteria" id="AAB98779">
    <property type="protein sequence ID" value="AAB98779"/>
    <property type="gene ID" value="MJ_0780"/>
</dbReference>
<dbReference type="GeneID" id="1451657"/>
<dbReference type="KEGG" id="mja:MJ_0780"/>
<dbReference type="eggNOG" id="arCOG01812">
    <property type="taxonomic scope" value="Archaea"/>
</dbReference>
<dbReference type="HOGENOM" id="CLU_827975_0_0_2"/>
<dbReference type="InParanoid" id="Q58190"/>
<dbReference type="OrthoDB" id="66029at2157"/>
<dbReference type="Proteomes" id="UP000000805">
    <property type="component" value="Chromosome"/>
</dbReference>
<dbReference type="GO" id="GO:0005886">
    <property type="term" value="C:plasma membrane"/>
    <property type="evidence" value="ECO:0007669"/>
    <property type="project" value="UniProtKB-SubCell"/>
</dbReference>
<dbReference type="InterPro" id="IPR056569">
    <property type="entry name" value="ArlJ-like"/>
</dbReference>
<dbReference type="InterPro" id="IPR018076">
    <property type="entry name" value="T2SS_GspF_dom"/>
</dbReference>
<dbReference type="PANTHER" id="PTHR35402">
    <property type="entry name" value="INTEGRAL MEMBRANE PROTEIN-RELATED"/>
    <property type="match status" value="1"/>
</dbReference>
<dbReference type="PANTHER" id="PTHR35402:SF1">
    <property type="entry name" value="TYPE II SECRETION SYSTEM PROTEIN GSPF DOMAIN-CONTAINING PROTEIN"/>
    <property type="match status" value="1"/>
</dbReference>
<dbReference type="Pfam" id="PF00482">
    <property type="entry name" value="T2SSF"/>
    <property type="match status" value="1"/>
</dbReference>
<proteinExistence type="predicted"/>
<sequence>MKGIFEKLKRRIDILLYKLGIRPLSIETLKELKESRKEREVLEFYDVYMEPEEFVDIEKYEFILYEGDIVGKTAESLSKIFKGNLFPSRNELRYMGVKDEVAYFKKVVIYMIITFLALLFMGLLDNNLLQGFVNGLIGAGIILVLSLFYPKIRLILFKGEIKLQILFTLIYMISILRAGASLPEVLESISKSREYGVVAFEAKSIIRDVNIGGYNLVEALERAKMRTRIPILKKLYDQMIVGYNKGNLPLLLGKLYEDIVRESMVKLDSSKFMIQNLGNLAFGVGLILPFTGMILSTMIGNQGFSGILSTINLLLLKIGPLLTLIFGIFVKLKIE</sequence>
<reference key="1">
    <citation type="journal article" date="1996" name="Science">
        <title>Complete genome sequence of the methanogenic archaeon, Methanococcus jannaschii.</title>
        <authorList>
            <person name="Bult C.J."/>
            <person name="White O."/>
            <person name="Olsen G.J."/>
            <person name="Zhou L."/>
            <person name="Fleischmann R.D."/>
            <person name="Sutton G.G."/>
            <person name="Blake J.A."/>
            <person name="FitzGerald L.M."/>
            <person name="Clayton R.A."/>
            <person name="Gocayne J.D."/>
            <person name="Kerlavage A.R."/>
            <person name="Dougherty B.A."/>
            <person name="Tomb J.-F."/>
            <person name="Adams M.D."/>
            <person name="Reich C.I."/>
            <person name="Overbeek R."/>
            <person name="Kirkness E.F."/>
            <person name="Weinstock K.G."/>
            <person name="Merrick J.M."/>
            <person name="Glodek A."/>
            <person name="Scott J.L."/>
            <person name="Geoghagen N.S.M."/>
            <person name="Weidman J.F."/>
            <person name="Fuhrmann J.L."/>
            <person name="Nguyen D."/>
            <person name="Utterback T.R."/>
            <person name="Kelley J.M."/>
            <person name="Peterson J.D."/>
            <person name="Sadow P.W."/>
            <person name="Hanna M.C."/>
            <person name="Cotton M.D."/>
            <person name="Roberts K.M."/>
            <person name="Hurst M.A."/>
            <person name="Kaine B.P."/>
            <person name="Borodovsky M."/>
            <person name="Klenk H.-P."/>
            <person name="Fraser C.M."/>
            <person name="Smith H.O."/>
            <person name="Woese C.R."/>
            <person name="Venter J.C."/>
        </authorList>
    </citation>
    <scope>NUCLEOTIDE SEQUENCE [LARGE SCALE GENOMIC DNA]</scope>
    <source>
        <strain>ATCC 43067 / DSM 2661 / JAL-1 / JCM 10045 / NBRC 100440</strain>
    </source>
</reference>
<name>Y780_METJA</name>
<keyword id="KW-1003">Cell membrane</keyword>
<keyword id="KW-0472">Membrane</keyword>
<keyword id="KW-1185">Reference proteome</keyword>
<keyword id="KW-0812">Transmembrane</keyword>
<keyword id="KW-1133">Transmembrane helix</keyword>
<evidence type="ECO:0000255" key="1"/>
<evidence type="ECO:0000305" key="2"/>